<accession>Q92MY4</accession>
<dbReference type="EMBL" id="AL591688">
    <property type="protein sequence ID" value="CAC47043.1"/>
    <property type="molecule type" value="Genomic_DNA"/>
</dbReference>
<dbReference type="RefSeq" id="NP_386570.1">
    <property type="nucleotide sequence ID" value="NC_003047.1"/>
</dbReference>
<dbReference type="RefSeq" id="WP_010969956.1">
    <property type="nucleotide sequence ID" value="NC_003047.1"/>
</dbReference>
<dbReference type="SMR" id="Q92MY4"/>
<dbReference type="EnsemblBacteria" id="CAC47043">
    <property type="protein sequence ID" value="CAC47043"/>
    <property type="gene ID" value="SMc01831"/>
</dbReference>
<dbReference type="KEGG" id="sme:SMc01831"/>
<dbReference type="PATRIC" id="fig|266834.11.peg.3952"/>
<dbReference type="eggNOG" id="COG0830">
    <property type="taxonomic scope" value="Bacteria"/>
</dbReference>
<dbReference type="HOGENOM" id="CLU_049215_2_0_5"/>
<dbReference type="OrthoDB" id="9798772at2"/>
<dbReference type="Proteomes" id="UP000001976">
    <property type="component" value="Chromosome"/>
</dbReference>
<dbReference type="GO" id="GO:0005737">
    <property type="term" value="C:cytoplasm"/>
    <property type="evidence" value="ECO:0007669"/>
    <property type="project" value="UniProtKB-SubCell"/>
</dbReference>
<dbReference type="GO" id="GO:0016151">
    <property type="term" value="F:nickel cation binding"/>
    <property type="evidence" value="ECO:0007669"/>
    <property type="project" value="UniProtKB-UniRule"/>
</dbReference>
<dbReference type="Gene3D" id="1.10.4190.10">
    <property type="entry name" value="Urease accessory protein UreF"/>
    <property type="match status" value="1"/>
</dbReference>
<dbReference type="HAMAP" id="MF_01385">
    <property type="entry name" value="UreF"/>
    <property type="match status" value="1"/>
</dbReference>
<dbReference type="InterPro" id="IPR002639">
    <property type="entry name" value="UreF"/>
</dbReference>
<dbReference type="InterPro" id="IPR038277">
    <property type="entry name" value="UreF_sf"/>
</dbReference>
<dbReference type="PANTHER" id="PTHR33620">
    <property type="entry name" value="UREASE ACCESSORY PROTEIN F"/>
    <property type="match status" value="1"/>
</dbReference>
<dbReference type="PANTHER" id="PTHR33620:SF1">
    <property type="entry name" value="UREASE ACCESSORY PROTEIN F"/>
    <property type="match status" value="1"/>
</dbReference>
<dbReference type="Pfam" id="PF01730">
    <property type="entry name" value="UreF"/>
    <property type="match status" value="1"/>
</dbReference>
<dbReference type="PIRSF" id="PIRSF009467">
    <property type="entry name" value="Ureas_acces_UreF"/>
    <property type="match status" value="1"/>
</dbReference>
<gene>
    <name evidence="1" type="primary">ureF</name>
    <name type="ordered locus">R02464</name>
    <name type="ORF">SMc01831</name>
</gene>
<organism>
    <name type="scientific">Rhizobium meliloti (strain 1021)</name>
    <name type="common">Ensifer meliloti</name>
    <name type="synonym">Sinorhizobium meliloti</name>
    <dbReference type="NCBI Taxonomy" id="266834"/>
    <lineage>
        <taxon>Bacteria</taxon>
        <taxon>Pseudomonadati</taxon>
        <taxon>Pseudomonadota</taxon>
        <taxon>Alphaproteobacteria</taxon>
        <taxon>Hyphomicrobiales</taxon>
        <taxon>Rhizobiaceae</taxon>
        <taxon>Sinorhizobium/Ensifer group</taxon>
        <taxon>Sinorhizobium</taxon>
    </lineage>
</organism>
<evidence type="ECO:0000255" key="1">
    <source>
        <dbReference type="HAMAP-Rule" id="MF_01385"/>
    </source>
</evidence>
<sequence>MAEHADTQSLLRLVTWLSPAFPVGSFSYSGGLEQAIHDRLVTGADDLRLWCETLLDHGTTWNDALLLAEGYRACDDAARLIAASELAEALAGSREWHMETMLLGEAFLAAAGHWPHASLEFPGARAAYPVAVGAVAGAHRTGLEAALAAFLNATISNAVSVAIRCGVTGQRDGVGMLARMEKTIGAVATRATRASLDDLGAATIIADIASLRHEILHSRLFRT</sequence>
<name>UREF_RHIME</name>
<feature type="chain" id="PRO_0000344167" description="Urease accessory protein UreF">
    <location>
        <begin position="1"/>
        <end position="223"/>
    </location>
</feature>
<comment type="function">
    <text evidence="1">Required for maturation of urease via the functional incorporation of the urease nickel metallocenter.</text>
</comment>
<comment type="subunit">
    <text evidence="1">UreD, UreF and UreG form a complex that acts as a GTP-hydrolysis-dependent molecular chaperone, activating the urease apoprotein by helping to assemble the nickel containing metallocenter of UreC. The UreE protein probably delivers the nickel.</text>
</comment>
<comment type="subcellular location">
    <subcellularLocation>
        <location evidence="1">Cytoplasm</location>
    </subcellularLocation>
</comment>
<comment type="similarity">
    <text evidence="1">Belongs to the UreF family.</text>
</comment>
<proteinExistence type="inferred from homology"/>
<keyword id="KW-0143">Chaperone</keyword>
<keyword id="KW-0963">Cytoplasm</keyword>
<keyword id="KW-0996">Nickel insertion</keyword>
<keyword id="KW-1185">Reference proteome</keyword>
<reference key="1">
    <citation type="journal article" date="2001" name="Proc. Natl. Acad. Sci. U.S.A.">
        <title>Analysis of the chromosome sequence of the legume symbiont Sinorhizobium meliloti strain 1021.</title>
        <authorList>
            <person name="Capela D."/>
            <person name="Barloy-Hubler F."/>
            <person name="Gouzy J."/>
            <person name="Bothe G."/>
            <person name="Ampe F."/>
            <person name="Batut J."/>
            <person name="Boistard P."/>
            <person name="Becker A."/>
            <person name="Boutry M."/>
            <person name="Cadieu E."/>
            <person name="Dreano S."/>
            <person name="Gloux S."/>
            <person name="Godrie T."/>
            <person name="Goffeau A."/>
            <person name="Kahn D."/>
            <person name="Kiss E."/>
            <person name="Lelaure V."/>
            <person name="Masuy D."/>
            <person name="Pohl T."/>
            <person name="Portetelle D."/>
            <person name="Puehler A."/>
            <person name="Purnelle B."/>
            <person name="Ramsperger U."/>
            <person name="Renard C."/>
            <person name="Thebault P."/>
            <person name="Vandenbol M."/>
            <person name="Weidner S."/>
            <person name="Galibert F."/>
        </authorList>
    </citation>
    <scope>NUCLEOTIDE SEQUENCE [LARGE SCALE GENOMIC DNA]</scope>
    <source>
        <strain>1021</strain>
    </source>
</reference>
<reference key="2">
    <citation type="journal article" date="2001" name="Science">
        <title>The composite genome of the legume symbiont Sinorhizobium meliloti.</title>
        <authorList>
            <person name="Galibert F."/>
            <person name="Finan T.M."/>
            <person name="Long S.R."/>
            <person name="Puehler A."/>
            <person name="Abola P."/>
            <person name="Ampe F."/>
            <person name="Barloy-Hubler F."/>
            <person name="Barnett M.J."/>
            <person name="Becker A."/>
            <person name="Boistard P."/>
            <person name="Bothe G."/>
            <person name="Boutry M."/>
            <person name="Bowser L."/>
            <person name="Buhrmester J."/>
            <person name="Cadieu E."/>
            <person name="Capela D."/>
            <person name="Chain P."/>
            <person name="Cowie A."/>
            <person name="Davis R.W."/>
            <person name="Dreano S."/>
            <person name="Federspiel N.A."/>
            <person name="Fisher R.F."/>
            <person name="Gloux S."/>
            <person name="Godrie T."/>
            <person name="Goffeau A."/>
            <person name="Golding B."/>
            <person name="Gouzy J."/>
            <person name="Gurjal M."/>
            <person name="Hernandez-Lucas I."/>
            <person name="Hong A."/>
            <person name="Huizar L."/>
            <person name="Hyman R.W."/>
            <person name="Jones T."/>
            <person name="Kahn D."/>
            <person name="Kahn M.L."/>
            <person name="Kalman S."/>
            <person name="Keating D.H."/>
            <person name="Kiss E."/>
            <person name="Komp C."/>
            <person name="Lelaure V."/>
            <person name="Masuy D."/>
            <person name="Palm C."/>
            <person name="Peck M.C."/>
            <person name="Pohl T.M."/>
            <person name="Portetelle D."/>
            <person name="Purnelle B."/>
            <person name="Ramsperger U."/>
            <person name="Surzycki R."/>
            <person name="Thebault P."/>
            <person name="Vandenbol M."/>
            <person name="Vorhoelter F.J."/>
            <person name="Weidner S."/>
            <person name="Wells D.H."/>
            <person name="Wong K."/>
            <person name="Yeh K.-C."/>
            <person name="Batut J."/>
        </authorList>
    </citation>
    <scope>NUCLEOTIDE SEQUENCE [LARGE SCALE GENOMIC DNA]</scope>
    <source>
        <strain>1021</strain>
    </source>
</reference>
<protein>
    <recommendedName>
        <fullName evidence="1">Urease accessory protein UreF</fullName>
    </recommendedName>
</protein>